<accession>A7FPZ8</accession>
<gene>
    <name evidence="1" type="primary">rpsB</name>
    <name type="ordered locus">CLB_2299</name>
</gene>
<proteinExistence type="inferred from homology"/>
<dbReference type="EMBL" id="CP000726">
    <property type="protein sequence ID" value="ABS35336.1"/>
    <property type="molecule type" value="Genomic_DNA"/>
</dbReference>
<dbReference type="RefSeq" id="WP_003362578.1">
    <property type="nucleotide sequence ID" value="NC_009697.1"/>
</dbReference>
<dbReference type="SMR" id="A7FPZ8"/>
<dbReference type="GeneID" id="5186690"/>
<dbReference type="KEGG" id="cba:CLB_2299"/>
<dbReference type="HOGENOM" id="CLU_040318_1_2_9"/>
<dbReference type="GO" id="GO:0022627">
    <property type="term" value="C:cytosolic small ribosomal subunit"/>
    <property type="evidence" value="ECO:0007669"/>
    <property type="project" value="TreeGrafter"/>
</dbReference>
<dbReference type="GO" id="GO:0003735">
    <property type="term" value="F:structural constituent of ribosome"/>
    <property type="evidence" value="ECO:0007669"/>
    <property type="project" value="InterPro"/>
</dbReference>
<dbReference type="GO" id="GO:0006412">
    <property type="term" value="P:translation"/>
    <property type="evidence" value="ECO:0007669"/>
    <property type="project" value="UniProtKB-UniRule"/>
</dbReference>
<dbReference type="CDD" id="cd01425">
    <property type="entry name" value="RPS2"/>
    <property type="match status" value="1"/>
</dbReference>
<dbReference type="FunFam" id="1.10.287.610:FF:000001">
    <property type="entry name" value="30S ribosomal protein S2"/>
    <property type="match status" value="1"/>
</dbReference>
<dbReference type="Gene3D" id="3.40.50.10490">
    <property type="entry name" value="Glucose-6-phosphate isomerase like protein, domain 1"/>
    <property type="match status" value="1"/>
</dbReference>
<dbReference type="Gene3D" id="1.10.287.610">
    <property type="entry name" value="Helix hairpin bin"/>
    <property type="match status" value="1"/>
</dbReference>
<dbReference type="HAMAP" id="MF_00291_B">
    <property type="entry name" value="Ribosomal_uS2_B"/>
    <property type="match status" value="1"/>
</dbReference>
<dbReference type="InterPro" id="IPR001865">
    <property type="entry name" value="Ribosomal_uS2"/>
</dbReference>
<dbReference type="InterPro" id="IPR005706">
    <property type="entry name" value="Ribosomal_uS2_bac/mit/plastid"/>
</dbReference>
<dbReference type="InterPro" id="IPR018130">
    <property type="entry name" value="Ribosomal_uS2_CS"/>
</dbReference>
<dbReference type="InterPro" id="IPR023591">
    <property type="entry name" value="Ribosomal_uS2_flav_dom_sf"/>
</dbReference>
<dbReference type="NCBIfam" id="TIGR01011">
    <property type="entry name" value="rpsB_bact"/>
    <property type="match status" value="1"/>
</dbReference>
<dbReference type="PANTHER" id="PTHR12534">
    <property type="entry name" value="30S RIBOSOMAL PROTEIN S2 PROKARYOTIC AND ORGANELLAR"/>
    <property type="match status" value="1"/>
</dbReference>
<dbReference type="PANTHER" id="PTHR12534:SF0">
    <property type="entry name" value="SMALL RIBOSOMAL SUBUNIT PROTEIN US2M"/>
    <property type="match status" value="1"/>
</dbReference>
<dbReference type="Pfam" id="PF00318">
    <property type="entry name" value="Ribosomal_S2"/>
    <property type="match status" value="1"/>
</dbReference>
<dbReference type="PRINTS" id="PR00395">
    <property type="entry name" value="RIBOSOMALS2"/>
</dbReference>
<dbReference type="SUPFAM" id="SSF52313">
    <property type="entry name" value="Ribosomal protein S2"/>
    <property type="match status" value="1"/>
</dbReference>
<dbReference type="PROSITE" id="PS00962">
    <property type="entry name" value="RIBOSOMAL_S2_1"/>
    <property type="match status" value="1"/>
</dbReference>
<organism>
    <name type="scientific">Clostridium botulinum (strain ATCC 19397 / Type A)</name>
    <dbReference type="NCBI Taxonomy" id="441770"/>
    <lineage>
        <taxon>Bacteria</taxon>
        <taxon>Bacillati</taxon>
        <taxon>Bacillota</taxon>
        <taxon>Clostridia</taxon>
        <taxon>Eubacteriales</taxon>
        <taxon>Clostridiaceae</taxon>
        <taxon>Clostridium</taxon>
    </lineage>
</organism>
<keyword id="KW-0687">Ribonucleoprotein</keyword>
<keyword id="KW-0689">Ribosomal protein</keyword>
<sequence>MSVISMKQLLEAGVHFGHQTRRWNPKMAPYIFTERNGIYIIDLQKTVKKVEEAYNFLRSVAEEGKDVLFVGTKKQAQEAIEEEAKRSEMHFVNNRWLGGMLTNFTTITARINKLEELDKMEEDGTFEVLPKKEVIKLKNEREKLEKNLGGIRKLDANNVGAMFIVDPRKEKNAILEAKRLGIPVVAIVDTNCDPDEVDFVIPGNDDAIRAVRLIAAKMADAVLEGRQGEQLAE</sequence>
<evidence type="ECO:0000255" key="1">
    <source>
        <dbReference type="HAMAP-Rule" id="MF_00291"/>
    </source>
</evidence>
<evidence type="ECO:0000305" key="2"/>
<feature type="chain" id="PRO_1000003933" description="Small ribosomal subunit protein uS2">
    <location>
        <begin position="1"/>
        <end position="233"/>
    </location>
</feature>
<name>RS2_CLOB1</name>
<reference key="1">
    <citation type="journal article" date="2007" name="PLoS ONE">
        <title>Analysis of the neurotoxin complex genes in Clostridium botulinum A1-A4 and B1 strains: BoNT/A3, /Ba4 and /B1 clusters are located within plasmids.</title>
        <authorList>
            <person name="Smith T.J."/>
            <person name="Hill K.K."/>
            <person name="Foley B.T."/>
            <person name="Detter J.C."/>
            <person name="Munk A.C."/>
            <person name="Bruce D.C."/>
            <person name="Doggett N.A."/>
            <person name="Smith L.A."/>
            <person name="Marks J.D."/>
            <person name="Xie G."/>
            <person name="Brettin T.S."/>
        </authorList>
    </citation>
    <scope>NUCLEOTIDE SEQUENCE [LARGE SCALE GENOMIC DNA]</scope>
    <source>
        <strain>ATCC 19397 / Type A</strain>
    </source>
</reference>
<comment type="similarity">
    <text evidence="1">Belongs to the universal ribosomal protein uS2 family.</text>
</comment>
<protein>
    <recommendedName>
        <fullName evidence="1">Small ribosomal subunit protein uS2</fullName>
    </recommendedName>
    <alternativeName>
        <fullName evidence="2">30S ribosomal protein S2</fullName>
    </alternativeName>
</protein>